<keyword id="KW-1185">Reference proteome</keyword>
<keyword id="KW-0687">Ribonucleoprotein</keyword>
<keyword id="KW-0689">Ribosomal protein</keyword>
<keyword id="KW-0694">RNA-binding</keyword>
<keyword id="KW-0699">rRNA-binding</keyword>
<sequence length="161" mass="16569">MKLNELRDNPGARPKSKRLGRGIGSGKGKTSGKGVKGQKAREGVSLNGFEGGQLPIYRRLPKRGFNNVNRKDYAPLNVGTLAALIESGKIDAGQKITEATLRAAGVYAGSKLAGVRLLGRGEISQKVEIEVSGASASAIAAIEQAGGSVTTTVARAEPASA</sequence>
<comment type="function">
    <text evidence="1">Binds to the 23S rRNA.</text>
</comment>
<comment type="subunit">
    <text evidence="1">Part of the 50S ribosomal subunit.</text>
</comment>
<comment type="similarity">
    <text evidence="1">Belongs to the universal ribosomal protein uL15 family.</text>
</comment>
<gene>
    <name evidence="1" type="primary">rplO</name>
    <name type="ordered locus">Acry_1927</name>
</gene>
<dbReference type="EMBL" id="CP000697">
    <property type="protein sequence ID" value="ABQ31128.1"/>
    <property type="molecule type" value="Genomic_DNA"/>
</dbReference>
<dbReference type="RefSeq" id="WP_007424192.1">
    <property type="nucleotide sequence ID" value="NC_009484.1"/>
</dbReference>
<dbReference type="SMR" id="A5FZU6"/>
<dbReference type="STRING" id="349163.Acry_1927"/>
<dbReference type="KEGG" id="acr:Acry_1927"/>
<dbReference type="eggNOG" id="COG0200">
    <property type="taxonomic scope" value="Bacteria"/>
</dbReference>
<dbReference type="HOGENOM" id="CLU_055188_4_0_5"/>
<dbReference type="Proteomes" id="UP000000245">
    <property type="component" value="Chromosome"/>
</dbReference>
<dbReference type="GO" id="GO:0015934">
    <property type="term" value="C:large ribosomal subunit"/>
    <property type="evidence" value="ECO:0007669"/>
    <property type="project" value="InterPro"/>
</dbReference>
<dbReference type="GO" id="GO:0019843">
    <property type="term" value="F:rRNA binding"/>
    <property type="evidence" value="ECO:0007669"/>
    <property type="project" value="UniProtKB-UniRule"/>
</dbReference>
<dbReference type="GO" id="GO:0003735">
    <property type="term" value="F:structural constituent of ribosome"/>
    <property type="evidence" value="ECO:0007669"/>
    <property type="project" value="InterPro"/>
</dbReference>
<dbReference type="GO" id="GO:0006412">
    <property type="term" value="P:translation"/>
    <property type="evidence" value="ECO:0007669"/>
    <property type="project" value="UniProtKB-UniRule"/>
</dbReference>
<dbReference type="Gene3D" id="3.100.10.10">
    <property type="match status" value="1"/>
</dbReference>
<dbReference type="HAMAP" id="MF_01341">
    <property type="entry name" value="Ribosomal_uL15"/>
    <property type="match status" value="1"/>
</dbReference>
<dbReference type="InterPro" id="IPR030878">
    <property type="entry name" value="Ribosomal_uL15"/>
</dbReference>
<dbReference type="InterPro" id="IPR021131">
    <property type="entry name" value="Ribosomal_uL15/eL18"/>
</dbReference>
<dbReference type="InterPro" id="IPR036227">
    <property type="entry name" value="Ribosomal_uL15/eL18_sf"/>
</dbReference>
<dbReference type="InterPro" id="IPR005749">
    <property type="entry name" value="Ribosomal_uL15_bac-type"/>
</dbReference>
<dbReference type="InterPro" id="IPR001196">
    <property type="entry name" value="Ribosomal_uL15_CS"/>
</dbReference>
<dbReference type="NCBIfam" id="TIGR01071">
    <property type="entry name" value="rplO_bact"/>
    <property type="match status" value="1"/>
</dbReference>
<dbReference type="PANTHER" id="PTHR12934">
    <property type="entry name" value="50S RIBOSOMAL PROTEIN L15"/>
    <property type="match status" value="1"/>
</dbReference>
<dbReference type="PANTHER" id="PTHR12934:SF11">
    <property type="entry name" value="LARGE RIBOSOMAL SUBUNIT PROTEIN UL15M"/>
    <property type="match status" value="1"/>
</dbReference>
<dbReference type="Pfam" id="PF00828">
    <property type="entry name" value="Ribosomal_L27A"/>
    <property type="match status" value="1"/>
</dbReference>
<dbReference type="SUPFAM" id="SSF52080">
    <property type="entry name" value="Ribosomal proteins L15p and L18e"/>
    <property type="match status" value="1"/>
</dbReference>
<dbReference type="PROSITE" id="PS00475">
    <property type="entry name" value="RIBOSOMAL_L15"/>
    <property type="match status" value="1"/>
</dbReference>
<name>RL15_ACICJ</name>
<reference key="1">
    <citation type="submission" date="2007-05" db="EMBL/GenBank/DDBJ databases">
        <title>Complete sequence of chromosome of Acidiphilium cryptum JF-5.</title>
        <authorList>
            <consortium name="US DOE Joint Genome Institute"/>
            <person name="Copeland A."/>
            <person name="Lucas S."/>
            <person name="Lapidus A."/>
            <person name="Barry K."/>
            <person name="Detter J.C."/>
            <person name="Glavina del Rio T."/>
            <person name="Hammon N."/>
            <person name="Israni S."/>
            <person name="Dalin E."/>
            <person name="Tice H."/>
            <person name="Pitluck S."/>
            <person name="Sims D."/>
            <person name="Brettin T."/>
            <person name="Bruce D."/>
            <person name="Han C."/>
            <person name="Schmutz J."/>
            <person name="Larimer F."/>
            <person name="Land M."/>
            <person name="Hauser L."/>
            <person name="Kyrpides N."/>
            <person name="Kim E."/>
            <person name="Magnuson T."/>
            <person name="Richardson P."/>
        </authorList>
    </citation>
    <scope>NUCLEOTIDE SEQUENCE [LARGE SCALE GENOMIC DNA]</scope>
    <source>
        <strain>JF-5</strain>
    </source>
</reference>
<organism>
    <name type="scientific">Acidiphilium cryptum (strain JF-5)</name>
    <dbReference type="NCBI Taxonomy" id="349163"/>
    <lineage>
        <taxon>Bacteria</taxon>
        <taxon>Pseudomonadati</taxon>
        <taxon>Pseudomonadota</taxon>
        <taxon>Alphaproteobacteria</taxon>
        <taxon>Acetobacterales</taxon>
        <taxon>Acidocellaceae</taxon>
        <taxon>Acidiphilium</taxon>
    </lineage>
</organism>
<evidence type="ECO:0000255" key="1">
    <source>
        <dbReference type="HAMAP-Rule" id="MF_01341"/>
    </source>
</evidence>
<evidence type="ECO:0000256" key="2">
    <source>
        <dbReference type="SAM" id="MobiDB-lite"/>
    </source>
</evidence>
<evidence type="ECO:0000305" key="3"/>
<protein>
    <recommendedName>
        <fullName evidence="1">Large ribosomal subunit protein uL15</fullName>
    </recommendedName>
    <alternativeName>
        <fullName evidence="3">50S ribosomal protein L15</fullName>
    </alternativeName>
</protein>
<accession>A5FZU6</accession>
<feature type="chain" id="PRO_1000054417" description="Large ribosomal subunit protein uL15">
    <location>
        <begin position="1"/>
        <end position="161"/>
    </location>
</feature>
<feature type="region of interest" description="Disordered" evidence="2">
    <location>
        <begin position="1"/>
        <end position="42"/>
    </location>
</feature>
<feature type="compositionally biased region" description="Basic and acidic residues" evidence="2">
    <location>
        <begin position="1"/>
        <end position="10"/>
    </location>
</feature>
<feature type="compositionally biased region" description="Gly residues" evidence="2">
    <location>
        <begin position="21"/>
        <end position="35"/>
    </location>
</feature>
<proteinExistence type="inferred from homology"/>